<dbReference type="EC" id="3.1.1.-"/>
<dbReference type="EMBL" id="AL132958">
    <property type="protein sequence ID" value="CAB64213.1"/>
    <property type="status" value="ALT_SEQ"/>
    <property type="molecule type" value="Genomic_DNA"/>
</dbReference>
<dbReference type="EMBL" id="CP002686">
    <property type="protein sequence ID" value="AEE79037.1"/>
    <property type="molecule type" value="Genomic_DNA"/>
</dbReference>
<dbReference type="EMBL" id="AK229079">
    <property type="protein sequence ID" value="BAF00960.1"/>
    <property type="molecule type" value="mRNA"/>
</dbReference>
<dbReference type="EMBL" id="BT033018">
    <property type="protein sequence ID" value="ACE00758.1"/>
    <property type="molecule type" value="mRNA"/>
</dbReference>
<dbReference type="PIR" id="T46156">
    <property type="entry name" value="T46156"/>
</dbReference>
<dbReference type="RefSeq" id="NP_190878.2">
    <property type="nucleotide sequence ID" value="NM_115170.5"/>
</dbReference>
<dbReference type="SMR" id="Q0WPI9"/>
<dbReference type="FunCoup" id="Q0WPI9">
    <property type="interactions" value="90"/>
</dbReference>
<dbReference type="STRING" id="3702.Q0WPI9"/>
<dbReference type="GlyGen" id="Q0WPI9">
    <property type="glycosylation" value="3 sites"/>
</dbReference>
<dbReference type="PaxDb" id="3702-AT3G53100.1"/>
<dbReference type="ProteomicsDB" id="247100"/>
<dbReference type="EnsemblPlants" id="AT3G53100.1">
    <property type="protein sequence ID" value="AT3G53100.1"/>
    <property type="gene ID" value="AT3G53100"/>
</dbReference>
<dbReference type="GeneID" id="824476"/>
<dbReference type="Gramene" id="AT3G53100.1">
    <property type="protein sequence ID" value="AT3G53100.1"/>
    <property type="gene ID" value="AT3G53100"/>
</dbReference>
<dbReference type="KEGG" id="ath:AT3G53100"/>
<dbReference type="Araport" id="AT3G53100"/>
<dbReference type="TAIR" id="AT3G53100"/>
<dbReference type="eggNOG" id="KOG0017">
    <property type="taxonomic scope" value="Eukaryota"/>
</dbReference>
<dbReference type="HOGENOM" id="CLU_015101_0_1_1"/>
<dbReference type="InParanoid" id="Q0WPI9"/>
<dbReference type="OMA" id="LVSCFFC"/>
<dbReference type="PhylomeDB" id="Q0WPI9"/>
<dbReference type="BioCyc" id="ARA:AT3G53100-MONOMER"/>
<dbReference type="PRO" id="PR:Q0WPI9"/>
<dbReference type="Proteomes" id="UP000006548">
    <property type="component" value="Chromosome 3"/>
</dbReference>
<dbReference type="ExpressionAtlas" id="Q0WPI9">
    <property type="expression patterns" value="baseline and differential"/>
</dbReference>
<dbReference type="GO" id="GO:0005576">
    <property type="term" value="C:extracellular region"/>
    <property type="evidence" value="ECO:0007669"/>
    <property type="project" value="UniProtKB-SubCell"/>
</dbReference>
<dbReference type="GO" id="GO:0016788">
    <property type="term" value="F:hydrolase activity, acting on ester bonds"/>
    <property type="evidence" value="ECO:0007669"/>
    <property type="project" value="InterPro"/>
</dbReference>
<dbReference type="GO" id="GO:0016042">
    <property type="term" value="P:lipid catabolic process"/>
    <property type="evidence" value="ECO:0007669"/>
    <property type="project" value="UniProtKB-KW"/>
</dbReference>
<dbReference type="CDD" id="cd01837">
    <property type="entry name" value="SGNH_plant_lipase_like"/>
    <property type="match status" value="1"/>
</dbReference>
<dbReference type="FunFam" id="3.40.50.1110:FF:000003">
    <property type="entry name" value="GDSL esterase/lipase APG"/>
    <property type="match status" value="1"/>
</dbReference>
<dbReference type="Gene3D" id="3.40.50.1110">
    <property type="entry name" value="SGNH hydrolase"/>
    <property type="match status" value="1"/>
</dbReference>
<dbReference type="InterPro" id="IPR001087">
    <property type="entry name" value="GDSL"/>
</dbReference>
<dbReference type="InterPro" id="IPR050592">
    <property type="entry name" value="GDSL_lipolytic_enzyme"/>
</dbReference>
<dbReference type="InterPro" id="IPR036514">
    <property type="entry name" value="SGNH_hydro_sf"/>
</dbReference>
<dbReference type="InterPro" id="IPR035669">
    <property type="entry name" value="SGNH_plant_lipase-like"/>
</dbReference>
<dbReference type="PANTHER" id="PTHR45642">
    <property type="entry name" value="GDSL ESTERASE/LIPASE EXL3"/>
    <property type="match status" value="1"/>
</dbReference>
<dbReference type="PANTHER" id="PTHR45642:SF63">
    <property type="entry name" value="GDSL ESTERASE_LIPASE"/>
    <property type="match status" value="1"/>
</dbReference>
<dbReference type="Pfam" id="PF00657">
    <property type="entry name" value="Lipase_GDSL"/>
    <property type="match status" value="1"/>
</dbReference>
<organism>
    <name type="scientific">Arabidopsis thaliana</name>
    <name type="common">Mouse-ear cress</name>
    <dbReference type="NCBI Taxonomy" id="3702"/>
    <lineage>
        <taxon>Eukaryota</taxon>
        <taxon>Viridiplantae</taxon>
        <taxon>Streptophyta</taxon>
        <taxon>Embryophyta</taxon>
        <taxon>Tracheophyta</taxon>
        <taxon>Spermatophyta</taxon>
        <taxon>Magnoliopsida</taxon>
        <taxon>eudicotyledons</taxon>
        <taxon>Gunneridae</taxon>
        <taxon>Pentapetalae</taxon>
        <taxon>rosids</taxon>
        <taxon>malvids</taxon>
        <taxon>Brassicales</taxon>
        <taxon>Brassicaceae</taxon>
        <taxon>Camelineae</taxon>
        <taxon>Arabidopsis</taxon>
    </lineage>
</organism>
<accession>Q0WPI9</accession>
<accession>Q9SCQ1</accession>
<proteinExistence type="evidence at transcript level"/>
<sequence>MQKMRVSGFRVLLLVSCFFCKSKGAVVPALIMFGDSIVDVGNNNNLLSIVKSNFLPYGRDFIDQRPTGRFCNGKLAVDFSAEYLGFSSYPPAFLSREASNENILIGANFASASSGYYDATSVPFGSISLTRQLSYYRAYQNRVTRMIGRGNARILFSRGIHILSAGSSDFLQNYYINPLLNILNTPDQFADILLRSFSEFIQNLYELGARRIGVISLPPMGCLPAAITLFGAGNKSCVERLNNDAIMFNTKLENTTRLLMNRHSGLRLVAFNVYQPFLDIITNPTDNGFFETKRACCGTGTIETSFLCNSLSFGTCVNATGYVFWDGFHPTEAVNELLAGQLLGQGISLIN</sequence>
<evidence type="ECO:0000250" key="1"/>
<evidence type="ECO:0000255" key="2"/>
<evidence type="ECO:0000305" key="3"/>
<name>GDL59_ARATH</name>
<gene>
    <name type="ordered locus">At3g53100</name>
    <name type="ORF">T4D2.30</name>
</gene>
<protein>
    <recommendedName>
        <fullName>GDSL esterase/lipase At3g53100</fullName>
        <ecNumber>3.1.1.-</ecNumber>
    </recommendedName>
    <alternativeName>
        <fullName>Extracellular lipase At3g53100</fullName>
    </alternativeName>
</protein>
<comment type="subcellular location">
    <subcellularLocation>
        <location evidence="3">Secreted</location>
    </subcellularLocation>
</comment>
<comment type="similarity">
    <text evidence="3">Belongs to the 'GDSL' lipolytic enzyme family.</text>
</comment>
<comment type="sequence caution" evidence="3">
    <conflict type="erroneous gene model prediction">
        <sequence resource="EMBL-CDS" id="CAB64213"/>
    </conflict>
</comment>
<keyword id="KW-0325">Glycoprotein</keyword>
<keyword id="KW-0378">Hydrolase</keyword>
<keyword id="KW-0442">Lipid degradation</keyword>
<keyword id="KW-0443">Lipid metabolism</keyword>
<keyword id="KW-1185">Reference proteome</keyword>
<keyword id="KW-0964">Secreted</keyword>
<keyword id="KW-0732">Signal</keyword>
<feature type="signal peptide" evidence="2">
    <location>
        <begin position="1"/>
        <end position="24"/>
    </location>
</feature>
<feature type="chain" id="PRO_0000367400" description="GDSL esterase/lipase At3g53100">
    <location>
        <begin position="25"/>
        <end position="351"/>
    </location>
</feature>
<feature type="active site" description="Nucleophile" evidence="1">
    <location>
        <position position="36"/>
    </location>
</feature>
<feature type="active site" evidence="1">
    <location>
        <position position="326"/>
    </location>
</feature>
<feature type="active site" evidence="1">
    <location>
        <position position="329"/>
    </location>
</feature>
<feature type="glycosylation site" description="N-linked (GlcNAc...) asparagine" evidence="2">
    <location>
        <position position="234"/>
    </location>
</feature>
<feature type="glycosylation site" description="N-linked (GlcNAc...) asparagine" evidence="2">
    <location>
        <position position="254"/>
    </location>
</feature>
<feature type="glycosylation site" description="N-linked (GlcNAc...) asparagine" evidence="2">
    <location>
        <position position="318"/>
    </location>
</feature>
<reference key="1">
    <citation type="journal article" date="2000" name="Nature">
        <title>Sequence and analysis of chromosome 3 of the plant Arabidopsis thaliana.</title>
        <authorList>
            <person name="Salanoubat M."/>
            <person name="Lemcke K."/>
            <person name="Rieger M."/>
            <person name="Ansorge W."/>
            <person name="Unseld M."/>
            <person name="Fartmann B."/>
            <person name="Valle G."/>
            <person name="Bloecker H."/>
            <person name="Perez-Alonso M."/>
            <person name="Obermaier B."/>
            <person name="Delseny M."/>
            <person name="Boutry M."/>
            <person name="Grivell L.A."/>
            <person name="Mache R."/>
            <person name="Puigdomenech P."/>
            <person name="De Simone V."/>
            <person name="Choisne N."/>
            <person name="Artiguenave F."/>
            <person name="Robert C."/>
            <person name="Brottier P."/>
            <person name="Wincker P."/>
            <person name="Cattolico L."/>
            <person name="Weissenbach J."/>
            <person name="Saurin W."/>
            <person name="Quetier F."/>
            <person name="Schaefer M."/>
            <person name="Mueller-Auer S."/>
            <person name="Gabel C."/>
            <person name="Fuchs M."/>
            <person name="Benes V."/>
            <person name="Wurmbach E."/>
            <person name="Drzonek H."/>
            <person name="Erfle H."/>
            <person name="Jordan N."/>
            <person name="Bangert S."/>
            <person name="Wiedelmann R."/>
            <person name="Kranz H."/>
            <person name="Voss H."/>
            <person name="Holland R."/>
            <person name="Brandt P."/>
            <person name="Nyakatura G."/>
            <person name="Vezzi A."/>
            <person name="D'Angelo M."/>
            <person name="Pallavicini A."/>
            <person name="Toppo S."/>
            <person name="Simionati B."/>
            <person name="Conrad A."/>
            <person name="Hornischer K."/>
            <person name="Kauer G."/>
            <person name="Loehnert T.-H."/>
            <person name="Nordsiek G."/>
            <person name="Reichelt J."/>
            <person name="Scharfe M."/>
            <person name="Schoen O."/>
            <person name="Bargues M."/>
            <person name="Terol J."/>
            <person name="Climent J."/>
            <person name="Navarro P."/>
            <person name="Collado C."/>
            <person name="Perez-Perez A."/>
            <person name="Ottenwaelder B."/>
            <person name="Duchemin D."/>
            <person name="Cooke R."/>
            <person name="Laudie M."/>
            <person name="Berger-Llauro C."/>
            <person name="Purnelle B."/>
            <person name="Masuy D."/>
            <person name="de Haan M."/>
            <person name="Maarse A.C."/>
            <person name="Alcaraz J.-P."/>
            <person name="Cottet A."/>
            <person name="Casacuberta E."/>
            <person name="Monfort A."/>
            <person name="Argiriou A."/>
            <person name="Flores M."/>
            <person name="Liguori R."/>
            <person name="Vitale D."/>
            <person name="Mannhaupt G."/>
            <person name="Haase D."/>
            <person name="Schoof H."/>
            <person name="Rudd S."/>
            <person name="Zaccaria P."/>
            <person name="Mewes H.-W."/>
            <person name="Mayer K.F.X."/>
            <person name="Kaul S."/>
            <person name="Town C.D."/>
            <person name="Koo H.L."/>
            <person name="Tallon L.J."/>
            <person name="Jenkins J."/>
            <person name="Rooney T."/>
            <person name="Rizzo M."/>
            <person name="Walts A."/>
            <person name="Utterback T."/>
            <person name="Fujii C.Y."/>
            <person name="Shea T.P."/>
            <person name="Creasy T.H."/>
            <person name="Haas B."/>
            <person name="Maiti R."/>
            <person name="Wu D."/>
            <person name="Peterson J."/>
            <person name="Van Aken S."/>
            <person name="Pai G."/>
            <person name="Militscher J."/>
            <person name="Sellers P."/>
            <person name="Gill J.E."/>
            <person name="Feldblyum T.V."/>
            <person name="Preuss D."/>
            <person name="Lin X."/>
            <person name="Nierman W.C."/>
            <person name="Salzberg S.L."/>
            <person name="White O."/>
            <person name="Venter J.C."/>
            <person name="Fraser C.M."/>
            <person name="Kaneko T."/>
            <person name="Nakamura Y."/>
            <person name="Sato S."/>
            <person name="Kato T."/>
            <person name="Asamizu E."/>
            <person name="Sasamoto S."/>
            <person name="Kimura T."/>
            <person name="Idesawa K."/>
            <person name="Kawashima K."/>
            <person name="Kishida Y."/>
            <person name="Kiyokawa C."/>
            <person name="Kohara M."/>
            <person name="Matsumoto M."/>
            <person name="Matsuno A."/>
            <person name="Muraki A."/>
            <person name="Nakayama S."/>
            <person name="Nakazaki N."/>
            <person name="Shinpo S."/>
            <person name="Takeuchi C."/>
            <person name="Wada T."/>
            <person name="Watanabe A."/>
            <person name="Yamada M."/>
            <person name="Yasuda M."/>
            <person name="Tabata S."/>
        </authorList>
    </citation>
    <scope>NUCLEOTIDE SEQUENCE [LARGE SCALE GENOMIC DNA]</scope>
    <source>
        <strain>cv. Columbia</strain>
    </source>
</reference>
<reference key="2">
    <citation type="journal article" date="2017" name="Plant J.">
        <title>Araport11: a complete reannotation of the Arabidopsis thaliana reference genome.</title>
        <authorList>
            <person name="Cheng C.Y."/>
            <person name="Krishnakumar V."/>
            <person name="Chan A.P."/>
            <person name="Thibaud-Nissen F."/>
            <person name="Schobel S."/>
            <person name="Town C.D."/>
        </authorList>
    </citation>
    <scope>GENOME REANNOTATION</scope>
    <source>
        <strain>cv. Columbia</strain>
    </source>
</reference>
<reference key="3">
    <citation type="submission" date="2006-07" db="EMBL/GenBank/DDBJ databases">
        <title>Large-scale analysis of RIKEN Arabidopsis full-length (RAFL) cDNAs.</title>
        <authorList>
            <person name="Totoki Y."/>
            <person name="Seki M."/>
            <person name="Ishida J."/>
            <person name="Nakajima M."/>
            <person name="Enju A."/>
            <person name="Kamiya A."/>
            <person name="Narusaka M."/>
            <person name="Shin-i T."/>
            <person name="Nakagawa M."/>
            <person name="Sakamoto N."/>
            <person name="Oishi K."/>
            <person name="Kohara Y."/>
            <person name="Kobayashi M."/>
            <person name="Toyoda A."/>
            <person name="Sakaki Y."/>
            <person name="Sakurai T."/>
            <person name="Iida K."/>
            <person name="Akiyama K."/>
            <person name="Satou M."/>
            <person name="Toyoda T."/>
            <person name="Konagaya A."/>
            <person name="Carninci P."/>
            <person name="Kawai J."/>
            <person name="Hayashizaki Y."/>
            <person name="Shinozaki K."/>
        </authorList>
    </citation>
    <scope>NUCLEOTIDE SEQUENCE [LARGE SCALE MRNA]</scope>
    <source>
        <strain>cv. Columbia</strain>
    </source>
</reference>
<reference key="4">
    <citation type="submission" date="2008-06" db="EMBL/GenBank/DDBJ databases">
        <title>Arabidopsis ORF clones.</title>
        <authorList>
            <person name="De Los Reyes C."/>
            <person name="Quan R."/>
            <person name="Chen H."/>
            <person name="Bautista V.R."/>
            <person name="Kim C.J."/>
            <person name="Ecker J.R."/>
        </authorList>
    </citation>
    <scope>NUCLEOTIDE SEQUENCE [LARGE SCALE MRNA]</scope>
    <source>
        <strain>cv. Columbia</strain>
    </source>
</reference>
<reference key="5">
    <citation type="journal article" date="2004" name="Prog. Lipid Res.">
        <title>GDSL family of serine esterases/lipases.</title>
        <authorList>
            <person name="Akoh C.C."/>
            <person name="Lee G.-C."/>
            <person name="Liaw Y.-C."/>
            <person name="Huang T.-H."/>
            <person name="Shaw J.-F."/>
        </authorList>
    </citation>
    <scope>REVIEW</scope>
</reference>
<reference key="6">
    <citation type="journal article" date="2008" name="Pak. J. Biol. Sci.">
        <title>Sequence analysis of GDSL lipase gene family in Arabidopsis thaliana.</title>
        <authorList>
            <person name="Ling H."/>
        </authorList>
    </citation>
    <scope>GENE FAMILY</scope>
</reference>